<accession>C0RJB1</accession>
<proteinExistence type="inferred from homology"/>
<gene>
    <name evidence="1" type="primary">trpC</name>
    <name type="ordered locus">BMEA_A1185</name>
</gene>
<reference key="1">
    <citation type="submission" date="2009-03" db="EMBL/GenBank/DDBJ databases">
        <title>Brucella melitensis ATCC 23457 whole genome shotgun sequencing project.</title>
        <authorList>
            <person name="Setubal J.C."/>
            <person name="Boyle S."/>
            <person name="Crasta O.R."/>
            <person name="Gillespie J.J."/>
            <person name="Kenyon R.W."/>
            <person name="Lu J."/>
            <person name="Mane S."/>
            <person name="Nagrani S."/>
            <person name="Shallom J.M."/>
            <person name="Shallom S."/>
            <person name="Shukla M."/>
            <person name="Snyder E.E."/>
            <person name="Sobral B.W."/>
            <person name="Wattam A.R."/>
            <person name="Will R."/>
            <person name="Williams K."/>
            <person name="Yoo H."/>
            <person name="Munk C."/>
            <person name="Tapia R."/>
            <person name="Han C."/>
            <person name="Detter J.C."/>
            <person name="Bruce D."/>
            <person name="Brettin T.S."/>
        </authorList>
    </citation>
    <scope>NUCLEOTIDE SEQUENCE [LARGE SCALE GENOMIC DNA]</scope>
    <source>
        <strain>ATCC 23457</strain>
    </source>
</reference>
<dbReference type="EC" id="4.1.1.48" evidence="1"/>
<dbReference type="EMBL" id="CP001488">
    <property type="protein sequence ID" value="ACO00919.1"/>
    <property type="molecule type" value="Genomic_DNA"/>
</dbReference>
<dbReference type="RefSeq" id="WP_002964269.1">
    <property type="nucleotide sequence ID" value="NC_012441.1"/>
</dbReference>
<dbReference type="SMR" id="C0RJB1"/>
<dbReference type="GeneID" id="93016523"/>
<dbReference type="KEGG" id="bmi:BMEA_A1185"/>
<dbReference type="HOGENOM" id="CLU_034247_2_0_5"/>
<dbReference type="UniPathway" id="UPA00035">
    <property type="reaction ID" value="UER00043"/>
</dbReference>
<dbReference type="Proteomes" id="UP000001748">
    <property type="component" value="Chromosome I"/>
</dbReference>
<dbReference type="GO" id="GO:0004425">
    <property type="term" value="F:indole-3-glycerol-phosphate synthase activity"/>
    <property type="evidence" value="ECO:0007669"/>
    <property type="project" value="UniProtKB-UniRule"/>
</dbReference>
<dbReference type="GO" id="GO:0004640">
    <property type="term" value="F:phosphoribosylanthranilate isomerase activity"/>
    <property type="evidence" value="ECO:0007669"/>
    <property type="project" value="TreeGrafter"/>
</dbReference>
<dbReference type="GO" id="GO:0000162">
    <property type="term" value="P:L-tryptophan biosynthetic process"/>
    <property type="evidence" value="ECO:0007669"/>
    <property type="project" value="UniProtKB-UniRule"/>
</dbReference>
<dbReference type="CDD" id="cd00331">
    <property type="entry name" value="IGPS"/>
    <property type="match status" value="1"/>
</dbReference>
<dbReference type="FunFam" id="3.20.20.70:FF:000024">
    <property type="entry name" value="Indole-3-glycerol phosphate synthase"/>
    <property type="match status" value="1"/>
</dbReference>
<dbReference type="Gene3D" id="3.20.20.70">
    <property type="entry name" value="Aldolase class I"/>
    <property type="match status" value="1"/>
</dbReference>
<dbReference type="HAMAP" id="MF_00134_B">
    <property type="entry name" value="IGPS_B"/>
    <property type="match status" value="1"/>
</dbReference>
<dbReference type="InterPro" id="IPR013785">
    <property type="entry name" value="Aldolase_TIM"/>
</dbReference>
<dbReference type="InterPro" id="IPR045186">
    <property type="entry name" value="Indole-3-glycerol_P_synth"/>
</dbReference>
<dbReference type="InterPro" id="IPR013798">
    <property type="entry name" value="Indole-3-glycerol_P_synth_dom"/>
</dbReference>
<dbReference type="InterPro" id="IPR001468">
    <property type="entry name" value="Indole-3-GlycerolPSynthase_CS"/>
</dbReference>
<dbReference type="InterPro" id="IPR011060">
    <property type="entry name" value="RibuloseP-bd_barrel"/>
</dbReference>
<dbReference type="NCBIfam" id="NF001370">
    <property type="entry name" value="PRK00278.1-2"/>
    <property type="match status" value="1"/>
</dbReference>
<dbReference type="NCBIfam" id="NF001373">
    <property type="entry name" value="PRK00278.1-6"/>
    <property type="match status" value="1"/>
</dbReference>
<dbReference type="NCBIfam" id="NF001377">
    <property type="entry name" value="PRK00278.2-4"/>
    <property type="match status" value="1"/>
</dbReference>
<dbReference type="PANTHER" id="PTHR22854:SF2">
    <property type="entry name" value="INDOLE-3-GLYCEROL-PHOSPHATE SYNTHASE"/>
    <property type="match status" value="1"/>
</dbReference>
<dbReference type="PANTHER" id="PTHR22854">
    <property type="entry name" value="TRYPTOPHAN BIOSYNTHESIS PROTEIN"/>
    <property type="match status" value="1"/>
</dbReference>
<dbReference type="Pfam" id="PF00218">
    <property type="entry name" value="IGPS"/>
    <property type="match status" value="1"/>
</dbReference>
<dbReference type="SUPFAM" id="SSF51366">
    <property type="entry name" value="Ribulose-phoshate binding barrel"/>
    <property type="match status" value="1"/>
</dbReference>
<dbReference type="PROSITE" id="PS00614">
    <property type="entry name" value="IGPS"/>
    <property type="match status" value="1"/>
</dbReference>
<organism>
    <name type="scientific">Brucella melitensis biotype 2 (strain ATCC 23457)</name>
    <dbReference type="NCBI Taxonomy" id="546272"/>
    <lineage>
        <taxon>Bacteria</taxon>
        <taxon>Pseudomonadati</taxon>
        <taxon>Pseudomonadota</taxon>
        <taxon>Alphaproteobacteria</taxon>
        <taxon>Hyphomicrobiales</taxon>
        <taxon>Brucellaceae</taxon>
        <taxon>Brucella/Ochrobactrum group</taxon>
        <taxon>Brucella</taxon>
    </lineage>
</organism>
<evidence type="ECO:0000255" key="1">
    <source>
        <dbReference type="HAMAP-Rule" id="MF_00134"/>
    </source>
</evidence>
<comment type="catalytic activity">
    <reaction evidence="1">
        <text>1-(2-carboxyphenylamino)-1-deoxy-D-ribulose 5-phosphate + H(+) = (1S,2R)-1-C-(indol-3-yl)glycerol 3-phosphate + CO2 + H2O</text>
        <dbReference type="Rhea" id="RHEA:23476"/>
        <dbReference type="ChEBI" id="CHEBI:15377"/>
        <dbReference type="ChEBI" id="CHEBI:15378"/>
        <dbReference type="ChEBI" id="CHEBI:16526"/>
        <dbReference type="ChEBI" id="CHEBI:58613"/>
        <dbReference type="ChEBI" id="CHEBI:58866"/>
        <dbReference type="EC" id="4.1.1.48"/>
    </reaction>
</comment>
<comment type="pathway">
    <text evidence="1">Amino-acid biosynthesis; L-tryptophan biosynthesis; L-tryptophan from chorismate: step 4/5.</text>
</comment>
<comment type="similarity">
    <text evidence="1">Belongs to the TrpC family.</text>
</comment>
<feature type="chain" id="PRO_1000198769" description="Indole-3-glycerol phosphate synthase">
    <location>
        <begin position="1"/>
        <end position="268"/>
    </location>
</feature>
<name>TRPC_BRUMB</name>
<sequence length="268" mass="29269">MSTDILRKIEAYKREEIAAAKARLALDELKARTRDQSAPRGFLKALEAKRAAGQFALIAEIKKASPSKGLIRPDFDPPALAKAYEEGGAACLSVLTDTPSFQGAPEFLTAARQACSLPALRKDFLFDPYQVYEARSWGADCILIIMASVDDDLAKELEDTAFALGMDALIEVHDEAEMERALKLSSRLLGVNNRNLRSFEVNLAVSERLAKMAPSDRLLVGESGIFTHEDCLRLEKSGIGTFLIGESLMRQHDVAAATRALLTGAEKL</sequence>
<keyword id="KW-0028">Amino-acid biosynthesis</keyword>
<keyword id="KW-0057">Aromatic amino acid biosynthesis</keyword>
<keyword id="KW-0210">Decarboxylase</keyword>
<keyword id="KW-0456">Lyase</keyword>
<keyword id="KW-0822">Tryptophan biosynthesis</keyword>
<protein>
    <recommendedName>
        <fullName evidence="1">Indole-3-glycerol phosphate synthase</fullName>
        <shortName evidence="1">IGPS</shortName>
        <ecNumber evidence="1">4.1.1.48</ecNumber>
    </recommendedName>
</protein>